<name>PUR1_MYCTO</name>
<proteinExistence type="inferred from homology"/>
<accession>P9WHQ6</accession>
<accession>L0T4Y9</accession>
<accession>O06626</accession>
<accession>P65829</accession>
<feature type="propeptide" id="PRO_0000428141" evidence="1">
    <location>
        <begin position="1"/>
        <end position="34"/>
    </location>
</feature>
<feature type="chain" id="PRO_0000428142" description="Amidophosphoribosyltransferase">
    <location>
        <begin position="35"/>
        <end position="527"/>
    </location>
</feature>
<feature type="domain" description="Glutamine amidotransferase type-2" evidence="2">
    <location>
        <begin position="35"/>
        <end position="261"/>
    </location>
</feature>
<feature type="region of interest" description="Disordered" evidence="3">
    <location>
        <begin position="1"/>
        <end position="30"/>
    </location>
</feature>
<feature type="compositionally biased region" description="Polar residues" evidence="3">
    <location>
        <begin position="15"/>
        <end position="29"/>
    </location>
</feature>
<feature type="active site" description="Nucleophile" evidence="2">
    <location>
        <position position="35"/>
    </location>
</feature>
<feature type="binding site" evidence="2">
    <location>
        <position position="276"/>
    </location>
    <ligand>
        <name>[4Fe-4S] cluster</name>
        <dbReference type="ChEBI" id="CHEBI:49883"/>
    </ligand>
</feature>
<feature type="binding site" evidence="2">
    <location>
        <position position="323"/>
    </location>
    <ligand>
        <name>Mg(2+)</name>
        <dbReference type="ChEBI" id="CHEBI:18420"/>
    </ligand>
</feature>
<feature type="binding site" evidence="2">
    <location>
        <position position="385"/>
    </location>
    <ligand>
        <name>Mg(2+)</name>
        <dbReference type="ChEBI" id="CHEBI:18420"/>
    </ligand>
</feature>
<feature type="binding site" evidence="2">
    <location>
        <position position="386"/>
    </location>
    <ligand>
        <name>Mg(2+)</name>
        <dbReference type="ChEBI" id="CHEBI:18420"/>
    </ligand>
</feature>
<feature type="binding site" evidence="2">
    <location>
        <position position="422"/>
    </location>
    <ligand>
        <name>[4Fe-4S] cluster</name>
        <dbReference type="ChEBI" id="CHEBI:49883"/>
    </ligand>
</feature>
<feature type="binding site" evidence="2">
    <location>
        <position position="478"/>
    </location>
    <ligand>
        <name>[4Fe-4S] cluster</name>
        <dbReference type="ChEBI" id="CHEBI:49883"/>
    </ligand>
</feature>
<feature type="binding site" evidence="2">
    <location>
        <position position="481"/>
    </location>
    <ligand>
        <name>[4Fe-4S] cluster</name>
        <dbReference type="ChEBI" id="CHEBI:49883"/>
    </ligand>
</feature>
<protein>
    <recommendedName>
        <fullName evidence="2">Amidophosphoribosyltransferase</fullName>
        <shortName evidence="2">ATase</shortName>
        <ecNumber evidence="2">2.4.2.14</ecNumber>
    </recommendedName>
    <alternativeName>
        <fullName evidence="2">Glutamine phosphoribosylpyrophosphate amidotransferase</fullName>
        <shortName evidence="2">GPATase</shortName>
    </alternativeName>
</protein>
<organism>
    <name type="scientific">Mycobacterium tuberculosis (strain CDC 1551 / Oshkosh)</name>
    <dbReference type="NCBI Taxonomy" id="83331"/>
    <lineage>
        <taxon>Bacteria</taxon>
        <taxon>Bacillati</taxon>
        <taxon>Actinomycetota</taxon>
        <taxon>Actinomycetes</taxon>
        <taxon>Mycobacteriales</taxon>
        <taxon>Mycobacteriaceae</taxon>
        <taxon>Mycobacterium</taxon>
        <taxon>Mycobacterium tuberculosis complex</taxon>
    </lineage>
</organism>
<keyword id="KW-0004">4Fe-4S</keyword>
<keyword id="KW-0315">Glutamine amidotransferase</keyword>
<keyword id="KW-0328">Glycosyltransferase</keyword>
<keyword id="KW-0408">Iron</keyword>
<keyword id="KW-0411">Iron-sulfur</keyword>
<keyword id="KW-0460">Magnesium</keyword>
<keyword id="KW-0479">Metal-binding</keyword>
<keyword id="KW-0658">Purine biosynthesis</keyword>
<keyword id="KW-1185">Reference proteome</keyword>
<keyword id="KW-0808">Transferase</keyword>
<sequence>MAVDSDYVTDRAAGSRQTVTGQQPEQDLNSPREECGVFGVWAPGEDVAKLTYYGLYALQHRGQEAAGIAVADGSQVLVFKDLGLVSQVFDEQTLAAMQGHVAIGHCRYSTTGDTTWENAQPVFRNTAAGTGVALGHNGNLVNAAALAARARDAGLIATRCPAPATTDSDILGALLAHGAADSTLEQAALDLLPTVRGAFCLTFMDENTLYACRDPYGVRPLSLGRLDRGWVVASETAALDIVGASFVRDIEPGELLAIDADGVRSTRFANPTPKGCVFEYVYLARPDSTIAGRSVHAARVEIGRRLARECPVEADLVIGVPESGTPAAVGYAQESGVPYGQGLMKNAYVGRTFIQPSQTIRQLGIRLKLNPLKEVIRGKRLIVVDDSIVRGNTQRALVRMLREAGAVELHVRIASPPVKWPCFYGIDFPSPAELIANAVENEDEMLEAVRHAIGADTLGYISLRGMVAASEQPTSRLCTACFDGKYPIELPRETALGKNVIEHMLANAARGAALGELAADDEVPVGR</sequence>
<comment type="function">
    <text evidence="2">Catalyzes the formation of phosphoribosylamine from phosphoribosylpyrophosphate (PRPP) and glutamine.</text>
</comment>
<comment type="catalytic activity">
    <reaction evidence="2">
        <text>5-phospho-beta-D-ribosylamine + L-glutamate + diphosphate = 5-phospho-alpha-D-ribose 1-diphosphate + L-glutamine + H2O</text>
        <dbReference type="Rhea" id="RHEA:14905"/>
        <dbReference type="ChEBI" id="CHEBI:15377"/>
        <dbReference type="ChEBI" id="CHEBI:29985"/>
        <dbReference type="ChEBI" id="CHEBI:33019"/>
        <dbReference type="ChEBI" id="CHEBI:58017"/>
        <dbReference type="ChEBI" id="CHEBI:58359"/>
        <dbReference type="ChEBI" id="CHEBI:58681"/>
        <dbReference type="EC" id="2.4.2.14"/>
    </reaction>
</comment>
<comment type="cofactor">
    <cofactor evidence="2">
        <name>Mg(2+)</name>
        <dbReference type="ChEBI" id="CHEBI:18420"/>
    </cofactor>
    <text evidence="2">Binds 1 Mg(2+) ion per subunit.</text>
</comment>
<comment type="cofactor">
    <cofactor evidence="2">
        <name>[4Fe-4S] cluster</name>
        <dbReference type="ChEBI" id="CHEBI:49883"/>
    </cofactor>
    <text evidence="2">Binds 1 [4Fe-4S] cluster per subunit.</text>
</comment>
<comment type="pathway">
    <text evidence="2">Purine metabolism; IMP biosynthesis via de novo pathway; N(1)-(5-phospho-D-ribosyl)glycinamide from 5-phospho-alpha-D-ribose 1-diphosphate: step 1/2.</text>
</comment>
<comment type="similarity">
    <text evidence="2">In the C-terminal section; belongs to the purine/pyrimidine phosphoribosyltransferase family.</text>
</comment>
<dbReference type="EC" id="2.4.2.14" evidence="2"/>
<dbReference type="EMBL" id="AE000516">
    <property type="protein sequence ID" value="AAK45071.1"/>
    <property type="molecule type" value="Genomic_DNA"/>
</dbReference>
<dbReference type="PIR" id="A70537">
    <property type="entry name" value="A70537"/>
</dbReference>
<dbReference type="SMR" id="P9WHQ6"/>
<dbReference type="MEROPS" id="C44.001"/>
<dbReference type="KEGG" id="mtc:MT0829"/>
<dbReference type="PATRIC" id="fig|83331.31.peg.889"/>
<dbReference type="HOGENOM" id="CLU_022389_3_2_11"/>
<dbReference type="UniPathway" id="UPA00074">
    <property type="reaction ID" value="UER00124"/>
</dbReference>
<dbReference type="Proteomes" id="UP000001020">
    <property type="component" value="Chromosome"/>
</dbReference>
<dbReference type="GO" id="GO:0051539">
    <property type="term" value="F:4 iron, 4 sulfur cluster binding"/>
    <property type="evidence" value="ECO:0007669"/>
    <property type="project" value="UniProtKB-KW"/>
</dbReference>
<dbReference type="GO" id="GO:0004044">
    <property type="term" value="F:amidophosphoribosyltransferase activity"/>
    <property type="evidence" value="ECO:0007669"/>
    <property type="project" value="UniProtKB-UniRule"/>
</dbReference>
<dbReference type="GO" id="GO:0000287">
    <property type="term" value="F:magnesium ion binding"/>
    <property type="evidence" value="ECO:0007669"/>
    <property type="project" value="UniProtKB-UniRule"/>
</dbReference>
<dbReference type="GO" id="GO:0006189">
    <property type="term" value="P:'de novo' IMP biosynthetic process"/>
    <property type="evidence" value="ECO:0007669"/>
    <property type="project" value="UniProtKB-UniRule"/>
</dbReference>
<dbReference type="GO" id="GO:0009113">
    <property type="term" value="P:purine nucleobase biosynthetic process"/>
    <property type="evidence" value="ECO:0007669"/>
    <property type="project" value="InterPro"/>
</dbReference>
<dbReference type="CDD" id="cd00715">
    <property type="entry name" value="GPATase_N"/>
    <property type="match status" value="1"/>
</dbReference>
<dbReference type="CDD" id="cd06223">
    <property type="entry name" value="PRTases_typeI"/>
    <property type="match status" value="1"/>
</dbReference>
<dbReference type="Gene3D" id="3.40.50.2020">
    <property type="match status" value="1"/>
</dbReference>
<dbReference type="Gene3D" id="3.60.20.10">
    <property type="entry name" value="Glutamine Phosphoribosylpyrophosphate, subunit 1, domain 1"/>
    <property type="match status" value="1"/>
</dbReference>
<dbReference type="HAMAP" id="MF_01931">
    <property type="entry name" value="PurF"/>
    <property type="match status" value="1"/>
</dbReference>
<dbReference type="InterPro" id="IPR017932">
    <property type="entry name" value="GATase_2_dom"/>
</dbReference>
<dbReference type="InterPro" id="IPR029055">
    <property type="entry name" value="Ntn_hydrolases_N"/>
</dbReference>
<dbReference type="InterPro" id="IPR000836">
    <property type="entry name" value="PRibTrfase_dom"/>
</dbReference>
<dbReference type="InterPro" id="IPR029057">
    <property type="entry name" value="PRTase-like"/>
</dbReference>
<dbReference type="InterPro" id="IPR005854">
    <property type="entry name" value="PurF"/>
</dbReference>
<dbReference type="InterPro" id="IPR035584">
    <property type="entry name" value="PurF_N"/>
</dbReference>
<dbReference type="NCBIfam" id="TIGR01134">
    <property type="entry name" value="purF"/>
    <property type="match status" value="1"/>
</dbReference>
<dbReference type="PANTHER" id="PTHR11907">
    <property type="entry name" value="AMIDOPHOSPHORIBOSYLTRANSFERASE"/>
    <property type="match status" value="1"/>
</dbReference>
<dbReference type="Pfam" id="PF13522">
    <property type="entry name" value="GATase_6"/>
    <property type="match status" value="1"/>
</dbReference>
<dbReference type="Pfam" id="PF00156">
    <property type="entry name" value="Pribosyltran"/>
    <property type="match status" value="1"/>
</dbReference>
<dbReference type="PIRSF" id="PIRSF000485">
    <property type="entry name" value="Amd_phspho_trans"/>
    <property type="match status" value="1"/>
</dbReference>
<dbReference type="SUPFAM" id="SSF56235">
    <property type="entry name" value="N-terminal nucleophile aminohydrolases (Ntn hydrolases)"/>
    <property type="match status" value="1"/>
</dbReference>
<dbReference type="SUPFAM" id="SSF53271">
    <property type="entry name" value="PRTase-like"/>
    <property type="match status" value="1"/>
</dbReference>
<dbReference type="PROSITE" id="PS51278">
    <property type="entry name" value="GATASE_TYPE_2"/>
    <property type="match status" value="1"/>
</dbReference>
<dbReference type="PROSITE" id="PS00103">
    <property type="entry name" value="PUR_PYR_PR_TRANSFER"/>
    <property type="match status" value="1"/>
</dbReference>
<reference key="1">
    <citation type="journal article" date="2002" name="J. Bacteriol.">
        <title>Whole-genome comparison of Mycobacterium tuberculosis clinical and laboratory strains.</title>
        <authorList>
            <person name="Fleischmann R.D."/>
            <person name="Alland D."/>
            <person name="Eisen J.A."/>
            <person name="Carpenter L."/>
            <person name="White O."/>
            <person name="Peterson J.D."/>
            <person name="DeBoy R.T."/>
            <person name="Dodson R.J."/>
            <person name="Gwinn M.L."/>
            <person name="Haft D.H."/>
            <person name="Hickey E.K."/>
            <person name="Kolonay J.F."/>
            <person name="Nelson W.C."/>
            <person name="Umayam L.A."/>
            <person name="Ermolaeva M.D."/>
            <person name="Salzberg S.L."/>
            <person name="Delcher A."/>
            <person name="Utterback T.R."/>
            <person name="Weidman J.F."/>
            <person name="Khouri H.M."/>
            <person name="Gill J."/>
            <person name="Mikula A."/>
            <person name="Bishai W."/>
            <person name="Jacobs W.R. Jr."/>
            <person name="Venter J.C."/>
            <person name="Fraser C.M."/>
        </authorList>
    </citation>
    <scope>NUCLEOTIDE SEQUENCE [LARGE SCALE GENOMIC DNA]</scope>
    <source>
        <strain>CDC 1551 / Oshkosh</strain>
    </source>
</reference>
<evidence type="ECO:0000250" key="1"/>
<evidence type="ECO:0000255" key="2">
    <source>
        <dbReference type="HAMAP-Rule" id="MF_01931"/>
    </source>
</evidence>
<evidence type="ECO:0000256" key="3">
    <source>
        <dbReference type="SAM" id="MobiDB-lite"/>
    </source>
</evidence>
<gene>
    <name evidence="2" type="primary">purF</name>
    <name type="ordered locus">MT0829</name>
</gene>